<feature type="chain" id="PRO_0000165360" description="Protein P18">
    <location>
        <begin position="1"/>
        <end position="90"/>
    </location>
</feature>
<feature type="transmembrane region" description="Helical" evidence="1">
    <location>
        <begin position="1"/>
        <end position="21"/>
    </location>
</feature>
<feature type="transmembrane region" description="Helical" evidence="1">
    <location>
        <begin position="37"/>
        <end position="57"/>
    </location>
</feature>
<feature type="transmembrane region" description="Helical" evidence="1">
    <location>
        <begin position="60"/>
        <end position="80"/>
    </location>
</feature>
<organismHost>
    <name type="scientific">Acinetobacter calcoaceticus</name>
    <dbReference type="NCBI Taxonomy" id="471"/>
</organismHost>
<organismHost>
    <name type="scientific">Escherichia coli</name>
    <dbReference type="NCBI Taxonomy" id="562"/>
</organismHost>
<organismHost>
    <name type="scientific">Proteus mirabilis</name>
    <dbReference type="NCBI Taxonomy" id="584"/>
</organismHost>
<organismHost>
    <name type="scientific">Pseudomonas aeruginosa</name>
    <dbReference type="NCBI Taxonomy" id="287"/>
</organismHost>
<organismHost>
    <name type="scientific">Pseudomonas fluorescens</name>
    <dbReference type="NCBI Taxonomy" id="294"/>
</organismHost>
<organismHost>
    <name type="scientific">Pseudomonas putida</name>
    <name type="common">Arthrobacter siderocapsulatus</name>
    <dbReference type="NCBI Taxonomy" id="303"/>
</organismHost>
<organismHost>
    <name type="scientific">Salmonella typhimurium</name>
    <dbReference type="NCBI Taxonomy" id="90371"/>
</organismHost>
<organismHost>
    <name type="scientific">Vibrio cholerae</name>
    <dbReference type="NCBI Taxonomy" id="666"/>
</organismHost>
<accession>P27389</accession>
<accession>Q3T4M8</accession>
<gene>
    <name type="primary">XVIII</name>
    <name type="synonym">M</name>
</gene>
<name>VP18_BPPRD</name>
<dbReference type="EMBL" id="AY848689">
    <property type="protein sequence ID" value="AAX45911.1"/>
    <property type="molecule type" value="Genomic_DNA"/>
</dbReference>
<dbReference type="PIR" id="F36776">
    <property type="entry name" value="WMBPMB"/>
</dbReference>
<dbReference type="RefSeq" id="NP_040695.1">
    <property type="nucleotide sequence ID" value="NC_001421.2"/>
</dbReference>
<dbReference type="RefSeq" id="YP_009639972.1">
    <property type="nucleotide sequence ID" value="NC_001421.2"/>
</dbReference>
<dbReference type="TCDB" id="1.K.2.1.1">
    <property type="family name" value="the prd1 phage dna delivery (prd1-dd) family"/>
</dbReference>
<dbReference type="GeneID" id="1260946"/>
<dbReference type="OrthoDB" id="34687at10239"/>
<dbReference type="Proteomes" id="UP000002143">
    <property type="component" value="Segment"/>
</dbReference>
<dbReference type="GO" id="GO:0016020">
    <property type="term" value="C:membrane"/>
    <property type="evidence" value="ECO:0007669"/>
    <property type="project" value="UniProtKB-KW"/>
</dbReference>
<dbReference type="GO" id="GO:0039641">
    <property type="term" value="C:viral inner membrane"/>
    <property type="evidence" value="ECO:0007669"/>
    <property type="project" value="UniProtKB-KW"/>
</dbReference>
<dbReference type="GO" id="GO:0055036">
    <property type="term" value="C:virion membrane"/>
    <property type="evidence" value="ECO:0007669"/>
    <property type="project" value="UniProtKB-SubCell"/>
</dbReference>
<dbReference type="GO" id="GO:0046718">
    <property type="term" value="P:symbiont entry into host cell"/>
    <property type="evidence" value="ECO:0007669"/>
    <property type="project" value="UniProtKB-KW"/>
</dbReference>
<evidence type="ECO:0000255" key="1"/>
<evidence type="ECO:0000269" key="2">
    <source>
    </source>
</evidence>
<evidence type="ECO:0000305" key="3"/>
<reference key="1">
    <citation type="journal article" date="1991" name="Virology">
        <title>Genome organization of membrane-containing bacteriophage PRD1.</title>
        <authorList>
            <person name="Bamford J.K.H."/>
            <person name="Haenninen A.-L."/>
            <person name="Pakula T.M."/>
            <person name="Ojala P.M."/>
            <person name="Kalkkinen N."/>
            <person name="Frilander M."/>
            <person name="Bamford D.H."/>
        </authorList>
    </citation>
    <scope>NUCLEOTIDE SEQUENCE [GENOMIC DNA]</scope>
</reference>
<reference key="2">
    <citation type="journal article" date="2005" name="J. Mol. Biol.">
        <title>A snapshot of viral evolution from genome analysis of the tectiviridae family.</title>
        <authorList>
            <person name="Saren A.M."/>
            <person name="Ravantti J.J."/>
            <person name="Benson S.D."/>
            <person name="Burnett R.M."/>
            <person name="Paulin L."/>
            <person name="Bamford D.H."/>
            <person name="Bamford J.K.H."/>
        </authorList>
    </citation>
    <scope>NUCLEOTIDE SEQUENCE [GENOMIC DNA]</scope>
</reference>
<reference key="3">
    <citation type="journal article" date="2002" name="Mol. Microbiol.">
        <title>Sequential model of phage PRD1 DNA delivery: active involvement of the viral membrane.</title>
        <authorList>
            <person name="Grahn A.M."/>
            <person name="Daugelavicius R."/>
            <person name="Bamford D.H."/>
        </authorList>
    </citation>
    <scope>FUNCTION</scope>
</reference>
<organism>
    <name type="scientific">Enterobacteria phage PRD1</name>
    <name type="common">Bacteriophage PRD1</name>
    <dbReference type="NCBI Taxonomy" id="10658"/>
    <lineage>
        <taxon>Viruses</taxon>
        <taxon>Varidnaviria</taxon>
        <taxon>Bamfordvirae</taxon>
        <taxon>Preplasmiviricota</taxon>
        <taxon>Tectiliviricetes</taxon>
        <taxon>Kalamavirales</taxon>
        <taxon>Tectiviridae</taxon>
        <taxon>Alphatectivirus</taxon>
        <taxon>Alphatectivirus PRD1</taxon>
    </lineage>
</organism>
<comment type="function">
    <text evidence="2">Component of the phage injection machinery. Required for DNA injection in the membrane transformation event. Involved in the formation of the membrane tail tube to connect the virus interior with the host cytosol. Essential for viral infectivity.</text>
</comment>
<comment type="subcellular location">
    <subcellularLocation>
        <location evidence="3">Virion membrane</location>
        <topology evidence="3">Multi-pass membrane protein</topology>
    </subcellularLocation>
    <text evidence="3">Part of the capsid inner membrane.</text>
</comment>
<proteinExistence type="predicted"/>
<sequence length="90" mass="9789">MPFGLIVIGIILAIAAYRDTLGELFSIIKDVSKDAKGFGYWVLAAVILGFAASIKPIKEPVNAFMILLMIVLLIRKRGAIDQISNQLRGS</sequence>
<keyword id="KW-1231">Capsid inner membrane protein</keyword>
<keyword id="KW-0472">Membrane</keyword>
<keyword id="KW-1185">Reference proteome</keyword>
<keyword id="KW-0812">Transmembrane</keyword>
<keyword id="KW-1133">Transmembrane helix</keyword>
<keyword id="KW-1171">Viral genome ejection through host cell envelope</keyword>
<keyword id="KW-1162">Viral penetration into host cytoplasm</keyword>
<keyword id="KW-0946">Virion</keyword>
<keyword id="KW-1160">Virus entry into host cell</keyword>
<protein>
    <recommendedName>
        <fullName>Protein P18</fullName>
    </recommendedName>
    <alternativeName>
        <fullName>GpM</fullName>
    </alternativeName>
    <alternativeName>
        <fullName>Protein M</fullName>
    </alternativeName>
</protein>